<keyword id="KW-0968">Cytoplasmic vesicle</keyword>
<keyword id="KW-0256">Endoplasmic reticulum</keyword>
<keyword id="KW-0931">ER-Golgi transport</keyword>
<keyword id="KW-0333">Golgi apparatus</keyword>
<keyword id="KW-0472">Membrane</keyword>
<keyword id="KW-0653">Protein transport</keyword>
<keyword id="KW-0675">Receptor</keyword>
<keyword id="KW-1185">Reference proteome</keyword>
<keyword id="KW-0812">Transmembrane</keyword>
<keyword id="KW-1133">Transmembrane helix</keyword>
<keyword id="KW-0813">Transport</keyword>
<feature type="chain" id="PRO_0000194159" description="ER lumen protein-retaining receptor 3">
    <location>
        <begin position="1"/>
        <end position="214"/>
    </location>
</feature>
<feature type="topological domain" description="Lumenal" evidence="5">
    <location>
        <begin position="1"/>
        <end position="4"/>
    </location>
</feature>
<feature type="transmembrane region" description="Helical" evidence="4">
    <location>
        <begin position="5"/>
        <end position="24"/>
    </location>
</feature>
<feature type="topological domain" description="Cytoplasmic" evidence="5">
    <location>
        <begin position="25"/>
        <end position="32"/>
    </location>
</feature>
<feature type="transmembrane region" description="Helical" evidence="4">
    <location>
        <begin position="33"/>
        <end position="52"/>
    </location>
</feature>
<feature type="topological domain" description="Lumenal" evidence="5">
    <location>
        <begin position="53"/>
        <end position="58"/>
    </location>
</feature>
<feature type="transmembrane region" description="Helical" evidence="4">
    <location>
        <begin position="59"/>
        <end position="79"/>
    </location>
</feature>
<feature type="topological domain" description="Cytoplasmic" evidence="5">
    <location>
        <begin position="80"/>
        <end position="92"/>
    </location>
</feature>
<feature type="transmembrane region" description="Helical" evidence="4">
    <location>
        <begin position="93"/>
        <end position="110"/>
    </location>
</feature>
<feature type="topological domain" description="Lumenal" evidence="5">
    <location>
        <begin position="111"/>
        <end position="116"/>
    </location>
</feature>
<feature type="transmembrane region" description="Helical" evidence="4">
    <location>
        <begin position="117"/>
        <end position="135"/>
    </location>
</feature>
<feature type="topological domain" description="Cytoplasmic" evidence="5">
    <location>
        <begin position="136"/>
        <end position="149"/>
    </location>
</feature>
<feature type="transmembrane region" description="Helical" evidence="4">
    <location>
        <begin position="150"/>
        <end position="168"/>
    </location>
</feature>
<feature type="topological domain" description="Lumenal" evidence="5">
    <location>
        <begin position="169"/>
        <end position="178"/>
    </location>
</feature>
<feature type="transmembrane region" description="Helical" evidence="4">
    <location>
        <begin position="179"/>
        <end position="199"/>
    </location>
</feature>
<feature type="topological domain" description="Cytoplasmic" evidence="5">
    <location>
        <begin position="200"/>
        <end position="214"/>
    </location>
</feature>
<feature type="region of interest" description="Interaction with the K-D-E-L motif on target proteins" evidence="4">
    <location>
        <begin position="47"/>
        <end position="48"/>
    </location>
</feature>
<feature type="region of interest" description="Interaction with the K-D-E-L motif on target proteins" evidence="4">
    <location>
        <begin position="159"/>
        <end position="169"/>
    </location>
</feature>
<feature type="region of interest" description="Important for recycling of cargo proteins with the sequence motif K-D-E-L from the Golgi to the endoplasmic reticulum" evidence="3">
    <location>
        <begin position="204"/>
        <end position="207"/>
    </location>
</feature>
<feature type="site" description="Interaction with the K-D-E-L motif on target proteins" evidence="4">
    <location>
        <position position="5"/>
    </location>
</feature>
<feature type="site" description="Interaction with the K-D-E-L motif on target proteins" evidence="4">
    <location>
        <position position="117"/>
    </location>
</feature>
<feature type="site" description="Important for recycling of cargo proteins with the sequence motif K-D-E-L from the Golgi to the endoplasmic reticulum" evidence="2">
    <location>
        <position position="193"/>
    </location>
</feature>
<feature type="sequence conflict" description="In Ref. 1; BAE23198." evidence="5" ref="1">
    <original>T</original>
    <variation>P</variation>
    <location>
        <position position="141"/>
    </location>
</feature>
<dbReference type="EMBL" id="AK136991">
    <property type="protein sequence ID" value="BAE23198.1"/>
    <property type="molecule type" value="mRNA"/>
</dbReference>
<dbReference type="EMBL" id="BC011472">
    <property type="protein sequence ID" value="AAH11472.1"/>
    <property type="molecule type" value="mRNA"/>
</dbReference>
<dbReference type="EMBL" id="BC024420">
    <property type="protein sequence ID" value="AAH24420.1"/>
    <property type="molecule type" value="mRNA"/>
</dbReference>
<dbReference type="CCDS" id="CCDS27642.1"/>
<dbReference type="RefSeq" id="NP_598851.2">
    <property type="nucleotide sequence ID" value="NM_134090.2"/>
</dbReference>
<dbReference type="SMR" id="Q8R1L4"/>
<dbReference type="BioGRID" id="222922">
    <property type="interactions" value="1"/>
</dbReference>
<dbReference type="FunCoup" id="Q8R1L4">
    <property type="interactions" value="575"/>
</dbReference>
<dbReference type="STRING" id="10090.ENSMUSP00000010974"/>
<dbReference type="PhosphoSitePlus" id="Q8R1L4"/>
<dbReference type="PaxDb" id="10090-ENSMUSP00000010974"/>
<dbReference type="ProteomicsDB" id="275534"/>
<dbReference type="Pumba" id="Q8R1L4"/>
<dbReference type="Antibodypedia" id="26349">
    <property type="antibodies" value="98 antibodies from 23 providers"/>
</dbReference>
<dbReference type="DNASU" id="105785"/>
<dbReference type="Ensembl" id="ENSMUST00000010974.9">
    <property type="protein sequence ID" value="ENSMUSP00000010974.8"/>
    <property type="gene ID" value="ENSMUSG00000010830.9"/>
</dbReference>
<dbReference type="GeneID" id="105785"/>
<dbReference type="KEGG" id="mmu:105785"/>
<dbReference type="UCSC" id="uc007wto.2">
    <property type="organism name" value="mouse"/>
</dbReference>
<dbReference type="AGR" id="MGI:2145953"/>
<dbReference type="CTD" id="11015"/>
<dbReference type="MGI" id="MGI:2145953">
    <property type="gene designation" value="Kdelr3"/>
</dbReference>
<dbReference type="VEuPathDB" id="HostDB:ENSMUSG00000010830"/>
<dbReference type="eggNOG" id="KOG3106">
    <property type="taxonomic scope" value="Eukaryota"/>
</dbReference>
<dbReference type="GeneTree" id="ENSGT00390000004010"/>
<dbReference type="HOGENOM" id="CLU_057784_0_0_1"/>
<dbReference type="InParanoid" id="Q8R1L4"/>
<dbReference type="OMA" id="QEVLWAF"/>
<dbReference type="OrthoDB" id="7694678at2759"/>
<dbReference type="PhylomeDB" id="Q8R1L4"/>
<dbReference type="TreeFam" id="TF314792"/>
<dbReference type="Reactome" id="R-MMU-6807878">
    <property type="pathway name" value="COPI-mediated anterograde transport"/>
</dbReference>
<dbReference type="Reactome" id="R-MMU-6811434">
    <property type="pathway name" value="COPI-dependent Golgi-to-ER retrograde traffic"/>
</dbReference>
<dbReference type="BioGRID-ORCS" id="105785">
    <property type="hits" value="3 hits in 80 CRISPR screens"/>
</dbReference>
<dbReference type="ChiTaRS" id="Kdelr3">
    <property type="organism name" value="mouse"/>
</dbReference>
<dbReference type="PRO" id="PR:Q8R1L4"/>
<dbReference type="Proteomes" id="UP000000589">
    <property type="component" value="Chromosome 15"/>
</dbReference>
<dbReference type="RNAct" id="Q8R1L4">
    <property type="molecule type" value="protein"/>
</dbReference>
<dbReference type="Bgee" id="ENSMUSG00000010830">
    <property type="expression patterns" value="Expressed in humerus cartilage element and 198 other cell types or tissues"/>
</dbReference>
<dbReference type="GO" id="GO:0030663">
    <property type="term" value="C:COPI-coated vesicle membrane"/>
    <property type="evidence" value="ECO:0007669"/>
    <property type="project" value="UniProtKB-SubCell"/>
</dbReference>
<dbReference type="GO" id="GO:0005789">
    <property type="term" value="C:endoplasmic reticulum membrane"/>
    <property type="evidence" value="ECO:0000250"/>
    <property type="project" value="UniProtKB"/>
</dbReference>
<dbReference type="GO" id="GO:0000139">
    <property type="term" value="C:Golgi membrane"/>
    <property type="evidence" value="ECO:0000250"/>
    <property type="project" value="UniProtKB"/>
</dbReference>
<dbReference type="GO" id="GO:0005046">
    <property type="term" value="F:KDEL sequence binding"/>
    <property type="evidence" value="ECO:0000250"/>
    <property type="project" value="UniProtKB"/>
</dbReference>
<dbReference type="GO" id="GO:0006621">
    <property type="term" value="P:protein retention in ER lumen"/>
    <property type="evidence" value="ECO:0007669"/>
    <property type="project" value="InterPro"/>
</dbReference>
<dbReference type="GO" id="GO:0015031">
    <property type="term" value="P:protein transport"/>
    <property type="evidence" value="ECO:0007669"/>
    <property type="project" value="UniProtKB-KW"/>
</dbReference>
<dbReference type="GO" id="GO:0006890">
    <property type="term" value="P:retrograde vesicle-mediated transport, Golgi to endoplasmic reticulum"/>
    <property type="evidence" value="ECO:0000250"/>
    <property type="project" value="UniProtKB"/>
</dbReference>
<dbReference type="InterPro" id="IPR000133">
    <property type="entry name" value="ER_ret_rcpt"/>
</dbReference>
<dbReference type="PANTHER" id="PTHR10585">
    <property type="entry name" value="ER LUMEN PROTEIN RETAINING RECEPTOR"/>
    <property type="match status" value="1"/>
</dbReference>
<dbReference type="Pfam" id="PF00810">
    <property type="entry name" value="ER_lumen_recept"/>
    <property type="match status" value="1"/>
</dbReference>
<dbReference type="PRINTS" id="PR00660">
    <property type="entry name" value="ERLUMENR"/>
</dbReference>
<dbReference type="PROSITE" id="PS00951">
    <property type="entry name" value="ER_LUMEN_RECEPTOR_1"/>
    <property type="match status" value="1"/>
</dbReference>
<dbReference type="PROSITE" id="PS00952">
    <property type="entry name" value="ER_LUMEN_RECEPTOR_2"/>
    <property type="match status" value="1"/>
</dbReference>
<name>ERD23_MOUSE</name>
<comment type="function">
    <text evidence="1">Receptor for the C-terminal sequence motif K-D-E-L that is present on endoplasmic reticulum resident proteins and that mediates their recycling from the Golgi back to the endoplasmic reticulum.</text>
</comment>
<comment type="subcellular location">
    <subcellularLocation>
        <location evidence="1">Endoplasmic reticulum membrane</location>
        <topology evidence="4">Multi-pass membrane protein</topology>
    </subcellularLocation>
    <subcellularLocation>
        <location evidence="1">Golgi apparatus membrane</location>
        <topology evidence="4">Multi-pass membrane protein</topology>
    </subcellularLocation>
    <subcellularLocation>
        <location evidence="1">Cytoplasmic vesicle</location>
        <location evidence="1">COPI-coated vesicle membrane</location>
        <topology evidence="4">Multi-pass membrane protein</topology>
    </subcellularLocation>
    <text evidence="1">Localized in the Golgi in the absence of bound proteins with the sequence motif K-D-E-L. Trafficks back to the endoplasmic reticulum together with cargo proteins containing the sequence motif K-D-E-L.</text>
</comment>
<comment type="domain">
    <text evidence="2 4">Binds the C-terminal sequence motif K-D-E-L in a hydrophilic cavity between the transmembrane domains. This triggers a conformation change that exposes a Lys-rich patch on the cytosolic surface of the protein (By similarity). This patch mediates recycling from the Golgi to the endoplasmic reticulum, probably via COPI vesicles (By similarity).</text>
</comment>
<comment type="similarity">
    <text evidence="5">Belongs to the ERD2 family.</text>
</comment>
<accession>Q8R1L4</accession>
<accession>Q3UVS1</accession>
<accession>Q91X67</accession>
<evidence type="ECO:0000250" key="1">
    <source>
        <dbReference type="UniProtKB" id="O43731"/>
    </source>
</evidence>
<evidence type="ECO:0000250" key="2">
    <source>
        <dbReference type="UniProtKB" id="P24390"/>
    </source>
</evidence>
<evidence type="ECO:0000250" key="3">
    <source>
        <dbReference type="UniProtKB" id="P33947"/>
    </source>
</evidence>
<evidence type="ECO:0000250" key="4">
    <source>
        <dbReference type="UniProtKB" id="Q5ZKX9"/>
    </source>
</evidence>
<evidence type="ECO:0000305" key="5"/>
<sequence length="214" mass="25111">MNVFRILGDLSHLLAMILLLVKIWRSKSCAGISGKSQILFALVFTTRYLDLFSNFISIYNTVMKVVFLLCAYVTVYMIYWKFRKTFDIENDTFRLEFLLVPVTGLSFLVNYSYTPMEVLWTFSIYLESVAILPQLFMISKTGEAETITTHYLFFLGLYRLLYLANWIRRYQTENFYDQISVVSGVVQTIFYCDFFYLYVTKVLKGKKLSLPVPV</sequence>
<organism>
    <name type="scientific">Mus musculus</name>
    <name type="common">Mouse</name>
    <dbReference type="NCBI Taxonomy" id="10090"/>
    <lineage>
        <taxon>Eukaryota</taxon>
        <taxon>Metazoa</taxon>
        <taxon>Chordata</taxon>
        <taxon>Craniata</taxon>
        <taxon>Vertebrata</taxon>
        <taxon>Euteleostomi</taxon>
        <taxon>Mammalia</taxon>
        <taxon>Eutheria</taxon>
        <taxon>Euarchontoglires</taxon>
        <taxon>Glires</taxon>
        <taxon>Rodentia</taxon>
        <taxon>Myomorpha</taxon>
        <taxon>Muroidea</taxon>
        <taxon>Muridae</taxon>
        <taxon>Murinae</taxon>
        <taxon>Mus</taxon>
        <taxon>Mus</taxon>
    </lineage>
</organism>
<reference key="1">
    <citation type="journal article" date="2005" name="Science">
        <title>The transcriptional landscape of the mammalian genome.</title>
        <authorList>
            <person name="Carninci P."/>
            <person name="Kasukawa T."/>
            <person name="Katayama S."/>
            <person name="Gough J."/>
            <person name="Frith M.C."/>
            <person name="Maeda N."/>
            <person name="Oyama R."/>
            <person name="Ravasi T."/>
            <person name="Lenhard B."/>
            <person name="Wells C."/>
            <person name="Kodzius R."/>
            <person name="Shimokawa K."/>
            <person name="Bajic V.B."/>
            <person name="Brenner S.E."/>
            <person name="Batalov S."/>
            <person name="Forrest A.R."/>
            <person name="Zavolan M."/>
            <person name="Davis M.J."/>
            <person name="Wilming L.G."/>
            <person name="Aidinis V."/>
            <person name="Allen J.E."/>
            <person name="Ambesi-Impiombato A."/>
            <person name="Apweiler R."/>
            <person name="Aturaliya R.N."/>
            <person name="Bailey T.L."/>
            <person name="Bansal M."/>
            <person name="Baxter L."/>
            <person name="Beisel K.W."/>
            <person name="Bersano T."/>
            <person name="Bono H."/>
            <person name="Chalk A.M."/>
            <person name="Chiu K.P."/>
            <person name="Choudhary V."/>
            <person name="Christoffels A."/>
            <person name="Clutterbuck D.R."/>
            <person name="Crowe M.L."/>
            <person name="Dalla E."/>
            <person name="Dalrymple B.P."/>
            <person name="de Bono B."/>
            <person name="Della Gatta G."/>
            <person name="di Bernardo D."/>
            <person name="Down T."/>
            <person name="Engstrom P."/>
            <person name="Fagiolini M."/>
            <person name="Faulkner G."/>
            <person name="Fletcher C.F."/>
            <person name="Fukushima T."/>
            <person name="Furuno M."/>
            <person name="Futaki S."/>
            <person name="Gariboldi M."/>
            <person name="Georgii-Hemming P."/>
            <person name="Gingeras T.R."/>
            <person name="Gojobori T."/>
            <person name="Green R.E."/>
            <person name="Gustincich S."/>
            <person name="Harbers M."/>
            <person name="Hayashi Y."/>
            <person name="Hensch T.K."/>
            <person name="Hirokawa N."/>
            <person name="Hill D."/>
            <person name="Huminiecki L."/>
            <person name="Iacono M."/>
            <person name="Ikeo K."/>
            <person name="Iwama A."/>
            <person name="Ishikawa T."/>
            <person name="Jakt M."/>
            <person name="Kanapin A."/>
            <person name="Katoh M."/>
            <person name="Kawasawa Y."/>
            <person name="Kelso J."/>
            <person name="Kitamura H."/>
            <person name="Kitano H."/>
            <person name="Kollias G."/>
            <person name="Krishnan S.P."/>
            <person name="Kruger A."/>
            <person name="Kummerfeld S.K."/>
            <person name="Kurochkin I.V."/>
            <person name="Lareau L.F."/>
            <person name="Lazarevic D."/>
            <person name="Lipovich L."/>
            <person name="Liu J."/>
            <person name="Liuni S."/>
            <person name="McWilliam S."/>
            <person name="Madan Babu M."/>
            <person name="Madera M."/>
            <person name="Marchionni L."/>
            <person name="Matsuda H."/>
            <person name="Matsuzawa S."/>
            <person name="Miki H."/>
            <person name="Mignone F."/>
            <person name="Miyake S."/>
            <person name="Morris K."/>
            <person name="Mottagui-Tabar S."/>
            <person name="Mulder N."/>
            <person name="Nakano N."/>
            <person name="Nakauchi H."/>
            <person name="Ng P."/>
            <person name="Nilsson R."/>
            <person name="Nishiguchi S."/>
            <person name="Nishikawa S."/>
            <person name="Nori F."/>
            <person name="Ohara O."/>
            <person name="Okazaki Y."/>
            <person name="Orlando V."/>
            <person name="Pang K.C."/>
            <person name="Pavan W.J."/>
            <person name="Pavesi G."/>
            <person name="Pesole G."/>
            <person name="Petrovsky N."/>
            <person name="Piazza S."/>
            <person name="Reed J."/>
            <person name="Reid J.F."/>
            <person name="Ring B.Z."/>
            <person name="Ringwald M."/>
            <person name="Rost B."/>
            <person name="Ruan Y."/>
            <person name="Salzberg S.L."/>
            <person name="Sandelin A."/>
            <person name="Schneider C."/>
            <person name="Schoenbach C."/>
            <person name="Sekiguchi K."/>
            <person name="Semple C.A."/>
            <person name="Seno S."/>
            <person name="Sessa L."/>
            <person name="Sheng Y."/>
            <person name="Shibata Y."/>
            <person name="Shimada H."/>
            <person name="Shimada K."/>
            <person name="Silva D."/>
            <person name="Sinclair B."/>
            <person name="Sperling S."/>
            <person name="Stupka E."/>
            <person name="Sugiura K."/>
            <person name="Sultana R."/>
            <person name="Takenaka Y."/>
            <person name="Taki K."/>
            <person name="Tammoja K."/>
            <person name="Tan S.L."/>
            <person name="Tang S."/>
            <person name="Taylor M.S."/>
            <person name="Tegner J."/>
            <person name="Teichmann S.A."/>
            <person name="Ueda H.R."/>
            <person name="van Nimwegen E."/>
            <person name="Verardo R."/>
            <person name="Wei C.L."/>
            <person name="Yagi K."/>
            <person name="Yamanishi H."/>
            <person name="Zabarovsky E."/>
            <person name="Zhu S."/>
            <person name="Zimmer A."/>
            <person name="Hide W."/>
            <person name="Bult C."/>
            <person name="Grimmond S.M."/>
            <person name="Teasdale R.D."/>
            <person name="Liu E.T."/>
            <person name="Brusic V."/>
            <person name="Quackenbush J."/>
            <person name="Wahlestedt C."/>
            <person name="Mattick J.S."/>
            <person name="Hume D.A."/>
            <person name="Kai C."/>
            <person name="Sasaki D."/>
            <person name="Tomaru Y."/>
            <person name="Fukuda S."/>
            <person name="Kanamori-Katayama M."/>
            <person name="Suzuki M."/>
            <person name="Aoki J."/>
            <person name="Arakawa T."/>
            <person name="Iida J."/>
            <person name="Imamura K."/>
            <person name="Itoh M."/>
            <person name="Kato T."/>
            <person name="Kawaji H."/>
            <person name="Kawagashira N."/>
            <person name="Kawashima T."/>
            <person name="Kojima M."/>
            <person name="Kondo S."/>
            <person name="Konno H."/>
            <person name="Nakano K."/>
            <person name="Ninomiya N."/>
            <person name="Nishio T."/>
            <person name="Okada M."/>
            <person name="Plessy C."/>
            <person name="Shibata K."/>
            <person name="Shiraki T."/>
            <person name="Suzuki S."/>
            <person name="Tagami M."/>
            <person name="Waki K."/>
            <person name="Watahiki A."/>
            <person name="Okamura-Oho Y."/>
            <person name="Suzuki H."/>
            <person name="Kawai J."/>
            <person name="Hayashizaki Y."/>
        </authorList>
    </citation>
    <scope>NUCLEOTIDE SEQUENCE [LARGE SCALE MRNA]</scope>
    <source>
        <strain>C57BL/6J</strain>
    </source>
</reference>
<reference key="2">
    <citation type="journal article" date="2004" name="Genome Res.">
        <title>The status, quality, and expansion of the NIH full-length cDNA project: the Mammalian Gene Collection (MGC).</title>
        <authorList>
            <consortium name="The MGC Project Team"/>
        </authorList>
    </citation>
    <scope>NUCLEOTIDE SEQUENCE [LARGE SCALE MRNA]</scope>
    <source>
        <strain>FVB/N</strain>
        <tissue>Colon</tissue>
        <tissue>Salivary gland</tissue>
    </source>
</reference>
<reference key="3">
    <citation type="journal article" date="2010" name="Cell">
        <title>A tissue-specific atlas of mouse protein phosphorylation and expression.</title>
        <authorList>
            <person name="Huttlin E.L."/>
            <person name="Jedrychowski M.P."/>
            <person name="Elias J.E."/>
            <person name="Goswami T."/>
            <person name="Rad R."/>
            <person name="Beausoleil S.A."/>
            <person name="Villen J."/>
            <person name="Haas W."/>
            <person name="Sowa M.E."/>
            <person name="Gygi S.P."/>
        </authorList>
    </citation>
    <scope>IDENTIFICATION BY MASS SPECTROMETRY [LARGE SCALE ANALYSIS]</scope>
    <source>
        <tissue>Pancreas</tissue>
    </source>
</reference>
<proteinExistence type="evidence at protein level"/>
<gene>
    <name type="primary">Kdelr3</name>
</gene>
<protein>
    <recommendedName>
        <fullName>ER lumen protein-retaining receptor 3</fullName>
    </recommendedName>
    <alternativeName>
        <fullName>KDEL endoplasmic reticulum protein retention receptor 3</fullName>
        <shortName>KDEL receptor 3</shortName>
    </alternativeName>
</protein>